<gene>
    <name type="primary">mdoG</name>
    <name type="synonym">opgG</name>
    <name type="ordered locus">c1313</name>
</gene>
<name>OPGG_ECOL6</name>
<comment type="function">
    <text evidence="1">Involved in the biosynthesis of osmoregulated periplasmic glucans (OPGs).</text>
</comment>
<comment type="pathway">
    <text>Glycan metabolism; osmoregulated periplasmic glucan (OPG) biosynthesis.</text>
</comment>
<comment type="subcellular location">
    <subcellularLocation>
        <location evidence="1">Periplasm</location>
    </subcellularLocation>
</comment>
<comment type="similarity">
    <text evidence="2">Belongs to the OpgD/OpgG family.</text>
</comment>
<comment type="sequence caution" evidence="2">
    <conflict type="erroneous initiation">
        <sequence resource="EMBL-CDS" id="AAN79786"/>
    </conflict>
</comment>
<organism>
    <name type="scientific">Escherichia coli O6:H1 (strain CFT073 / ATCC 700928 / UPEC)</name>
    <dbReference type="NCBI Taxonomy" id="199310"/>
    <lineage>
        <taxon>Bacteria</taxon>
        <taxon>Pseudomonadati</taxon>
        <taxon>Pseudomonadota</taxon>
        <taxon>Gammaproteobacteria</taxon>
        <taxon>Enterobacterales</taxon>
        <taxon>Enterobacteriaceae</taxon>
        <taxon>Escherichia</taxon>
    </lineage>
</organism>
<keyword id="KW-0574">Periplasm</keyword>
<keyword id="KW-1185">Reference proteome</keyword>
<keyword id="KW-0732">Signal</keyword>
<proteinExistence type="inferred from homology"/>
<sequence>MMKMRWLSAAVMLTLYTSSSWAFSIDDVAKQAQSLAGKGYEAPKSNLPSVFRDMKYADYQQIQFNHDKAYWNNLKTPFKLEFYHQGMYFDTPVKINEVTATAVKRIKYSPDYFTFGDVQHDKDTVKDLGFAGFKVLYPINSKDKNDEIVSMLGASYFRVIGAGQVYGLSARGLAIDTALPSGEEFPRFKEFWIERPKPTDKRLTIYALLDSPRATGAYKFVVMPGRDTVVDVQSKIYLRDKVGKLGVAPLTSMFLFGPNQPSPANNYRPELHDSNGLSIHAGNGEWIWRPLNNPKHLAVSSFSMENPQGFGLLQRGRDFSRFEDLDDRYDLRPSAWVTPKGEWGKGSVELVEIPTNDETNDNIVAYWTPDQLPEPGKEMNFKYTITFSRDEDKLHAPDNAWVQQTRRSTGDVKQSNLIRQPDGTIAFVVDFTGAEMKKLPEDTPVTAQTSIGDNGEIVESTVRYNPVTKGWRLVMRVKVKDAKKTTEMRAALVNADQTLSETWSYQLPANE</sequence>
<evidence type="ECO:0000250" key="1"/>
<evidence type="ECO:0000305" key="2"/>
<protein>
    <recommendedName>
        <fullName>Glucans biosynthesis protein G</fullName>
    </recommendedName>
</protein>
<feature type="signal peptide" evidence="1">
    <location>
        <begin position="1"/>
        <end position="22"/>
    </location>
</feature>
<feature type="chain" id="PRO_0000020222" description="Glucans biosynthesis protein G">
    <location>
        <begin position="23"/>
        <end position="511"/>
    </location>
</feature>
<dbReference type="EMBL" id="AE014075">
    <property type="protein sequence ID" value="AAN79786.1"/>
    <property type="status" value="ALT_INIT"/>
    <property type="molecule type" value="Genomic_DNA"/>
</dbReference>
<dbReference type="RefSeq" id="WP_001300662.1">
    <property type="nucleotide sequence ID" value="NZ_CP051263.1"/>
</dbReference>
<dbReference type="SMR" id="P67555"/>
<dbReference type="STRING" id="199310.c1313"/>
<dbReference type="GeneID" id="93776366"/>
<dbReference type="KEGG" id="ecc:c1313"/>
<dbReference type="eggNOG" id="COG3131">
    <property type="taxonomic scope" value="Bacteria"/>
</dbReference>
<dbReference type="HOGENOM" id="CLU_023403_2_0_6"/>
<dbReference type="UniPathway" id="UPA00637"/>
<dbReference type="Proteomes" id="UP000001410">
    <property type="component" value="Chromosome"/>
</dbReference>
<dbReference type="GO" id="GO:0030288">
    <property type="term" value="C:outer membrane-bounded periplasmic space"/>
    <property type="evidence" value="ECO:0007669"/>
    <property type="project" value="TreeGrafter"/>
</dbReference>
<dbReference type="GO" id="GO:0030246">
    <property type="term" value="F:carbohydrate binding"/>
    <property type="evidence" value="ECO:0007669"/>
    <property type="project" value="InterPro"/>
</dbReference>
<dbReference type="GO" id="GO:0003824">
    <property type="term" value="F:catalytic activity"/>
    <property type="evidence" value="ECO:0007669"/>
    <property type="project" value="InterPro"/>
</dbReference>
<dbReference type="GO" id="GO:0051274">
    <property type="term" value="P:beta-glucan biosynthetic process"/>
    <property type="evidence" value="ECO:0007669"/>
    <property type="project" value="TreeGrafter"/>
</dbReference>
<dbReference type="FunFam" id="2.60.40.10:FF:000294">
    <property type="entry name" value="Glucans biosynthesis protein G"/>
    <property type="match status" value="1"/>
</dbReference>
<dbReference type="FunFam" id="2.70.98.10:FF:000001">
    <property type="entry name" value="Glucans biosynthesis protein G"/>
    <property type="match status" value="1"/>
</dbReference>
<dbReference type="Gene3D" id="2.70.98.10">
    <property type="match status" value="1"/>
</dbReference>
<dbReference type="Gene3D" id="2.60.40.10">
    <property type="entry name" value="Immunoglobulins"/>
    <property type="match status" value="1"/>
</dbReference>
<dbReference type="HAMAP" id="MF_01069">
    <property type="entry name" value="MdoG_OpgG"/>
    <property type="match status" value="1"/>
</dbReference>
<dbReference type="InterPro" id="IPR011013">
    <property type="entry name" value="Gal_mutarotase_sf_dom"/>
</dbReference>
<dbReference type="InterPro" id="IPR014718">
    <property type="entry name" value="GH-type_carb-bd"/>
</dbReference>
<dbReference type="InterPro" id="IPR014438">
    <property type="entry name" value="Glucan_biosyn_MdoG/MdoD"/>
</dbReference>
<dbReference type="InterPro" id="IPR007444">
    <property type="entry name" value="Glucan_biosyn_MdoG_C"/>
</dbReference>
<dbReference type="InterPro" id="IPR013783">
    <property type="entry name" value="Ig-like_fold"/>
</dbReference>
<dbReference type="InterPro" id="IPR014756">
    <property type="entry name" value="Ig_E-set"/>
</dbReference>
<dbReference type="InterPro" id="IPR023704">
    <property type="entry name" value="MdoG_OpgG"/>
</dbReference>
<dbReference type="PANTHER" id="PTHR30504">
    <property type="entry name" value="GLUCANS BIOSYNTHESIS PROTEIN"/>
    <property type="match status" value="1"/>
</dbReference>
<dbReference type="PANTHER" id="PTHR30504:SF4">
    <property type="entry name" value="GLUCANS BIOSYNTHESIS PROTEIN G"/>
    <property type="match status" value="1"/>
</dbReference>
<dbReference type="Pfam" id="PF04349">
    <property type="entry name" value="MdoG"/>
    <property type="match status" value="1"/>
</dbReference>
<dbReference type="PIRSF" id="PIRSF006281">
    <property type="entry name" value="MdoG"/>
    <property type="match status" value="1"/>
</dbReference>
<dbReference type="SUPFAM" id="SSF81296">
    <property type="entry name" value="E set domains"/>
    <property type="match status" value="1"/>
</dbReference>
<dbReference type="SUPFAM" id="SSF74650">
    <property type="entry name" value="Galactose mutarotase-like"/>
    <property type="match status" value="1"/>
</dbReference>
<reference key="1">
    <citation type="journal article" date="2002" name="Proc. Natl. Acad. Sci. U.S.A.">
        <title>Extensive mosaic structure revealed by the complete genome sequence of uropathogenic Escherichia coli.</title>
        <authorList>
            <person name="Welch R.A."/>
            <person name="Burland V."/>
            <person name="Plunkett G. III"/>
            <person name="Redford P."/>
            <person name="Roesch P."/>
            <person name="Rasko D."/>
            <person name="Buckles E.L."/>
            <person name="Liou S.-R."/>
            <person name="Boutin A."/>
            <person name="Hackett J."/>
            <person name="Stroud D."/>
            <person name="Mayhew G.F."/>
            <person name="Rose D.J."/>
            <person name="Zhou S."/>
            <person name="Schwartz D.C."/>
            <person name="Perna N.T."/>
            <person name="Mobley H.L.T."/>
            <person name="Donnenberg M.S."/>
            <person name="Blattner F.R."/>
        </authorList>
    </citation>
    <scope>NUCLEOTIDE SEQUENCE [LARGE SCALE GENOMIC DNA]</scope>
    <source>
        <strain>CFT073 / ATCC 700928 / UPEC</strain>
    </source>
</reference>
<accession>P67555</accession>
<accession>Q8CW60</accession>
<accession>Q8X9I5</accession>